<dbReference type="EMBL" id="CP000774">
    <property type="protein sequence ID" value="ABS61924.1"/>
    <property type="molecule type" value="Genomic_DNA"/>
</dbReference>
<dbReference type="RefSeq" id="WP_011995215.1">
    <property type="nucleotide sequence ID" value="NC_009719.1"/>
</dbReference>
<dbReference type="SMR" id="A7HPU1"/>
<dbReference type="STRING" id="402881.Plav_0301"/>
<dbReference type="KEGG" id="pla:Plav_0301"/>
<dbReference type="eggNOG" id="COG0230">
    <property type="taxonomic scope" value="Bacteria"/>
</dbReference>
<dbReference type="HOGENOM" id="CLU_129938_2_0_5"/>
<dbReference type="OrthoDB" id="9804164at2"/>
<dbReference type="Proteomes" id="UP000006377">
    <property type="component" value="Chromosome"/>
</dbReference>
<dbReference type="GO" id="GO:1990904">
    <property type="term" value="C:ribonucleoprotein complex"/>
    <property type="evidence" value="ECO:0007669"/>
    <property type="project" value="UniProtKB-KW"/>
</dbReference>
<dbReference type="GO" id="GO:0005840">
    <property type="term" value="C:ribosome"/>
    <property type="evidence" value="ECO:0007669"/>
    <property type="project" value="UniProtKB-KW"/>
</dbReference>
<dbReference type="GO" id="GO:0003735">
    <property type="term" value="F:structural constituent of ribosome"/>
    <property type="evidence" value="ECO:0007669"/>
    <property type="project" value="InterPro"/>
</dbReference>
<dbReference type="GO" id="GO:0006412">
    <property type="term" value="P:translation"/>
    <property type="evidence" value="ECO:0007669"/>
    <property type="project" value="UniProtKB-UniRule"/>
</dbReference>
<dbReference type="FunFam" id="1.10.287.3980:FF:000001">
    <property type="entry name" value="Mitochondrial ribosomal protein L34"/>
    <property type="match status" value="1"/>
</dbReference>
<dbReference type="Gene3D" id="1.10.287.3980">
    <property type="match status" value="1"/>
</dbReference>
<dbReference type="HAMAP" id="MF_00391">
    <property type="entry name" value="Ribosomal_bL34"/>
    <property type="match status" value="1"/>
</dbReference>
<dbReference type="InterPro" id="IPR000271">
    <property type="entry name" value="Ribosomal_bL34"/>
</dbReference>
<dbReference type="InterPro" id="IPR020939">
    <property type="entry name" value="Ribosomal_bL34_CS"/>
</dbReference>
<dbReference type="NCBIfam" id="TIGR01030">
    <property type="entry name" value="rpmH_bact"/>
    <property type="match status" value="1"/>
</dbReference>
<dbReference type="PANTHER" id="PTHR14503:SF4">
    <property type="entry name" value="LARGE RIBOSOMAL SUBUNIT PROTEIN BL34M"/>
    <property type="match status" value="1"/>
</dbReference>
<dbReference type="PANTHER" id="PTHR14503">
    <property type="entry name" value="MITOCHONDRIAL RIBOSOMAL PROTEIN 34 FAMILY MEMBER"/>
    <property type="match status" value="1"/>
</dbReference>
<dbReference type="Pfam" id="PF00468">
    <property type="entry name" value="Ribosomal_L34"/>
    <property type="match status" value="1"/>
</dbReference>
<dbReference type="PROSITE" id="PS00784">
    <property type="entry name" value="RIBOSOMAL_L34"/>
    <property type="match status" value="1"/>
</dbReference>
<gene>
    <name evidence="1" type="primary">rpmH</name>
    <name type="ordered locus">Plav_0301</name>
</gene>
<organism>
    <name type="scientific">Parvibaculum lavamentivorans (strain DS-1 / DSM 13023 / NCIMB 13966)</name>
    <dbReference type="NCBI Taxonomy" id="402881"/>
    <lineage>
        <taxon>Bacteria</taxon>
        <taxon>Pseudomonadati</taxon>
        <taxon>Pseudomonadota</taxon>
        <taxon>Alphaproteobacteria</taxon>
        <taxon>Hyphomicrobiales</taxon>
        <taxon>Parvibaculaceae</taxon>
        <taxon>Parvibaculum</taxon>
    </lineage>
</organism>
<reference key="1">
    <citation type="journal article" date="2011" name="Stand. Genomic Sci.">
        <title>Complete genome sequence of Parvibaculum lavamentivorans type strain (DS-1(T)).</title>
        <authorList>
            <person name="Schleheck D."/>
            <person name="Weiss M."/>
            <person name="Pitluck S."/>
            <person name="Bruce D."/>
            <person name="Land M.L."/>
            <person name="Han S."/>
            <person name="Saunders E."/>
            <person name="Tapia R."/>
            <person name="Detter C."/>
            <person name="Brettin T."/>
            <person name="Han J."/>
            <person name="Woyke T."/>
            <person name="Goodwin L."/>
            <person name="Pennacchio L."/>
            <person name="Nolan M."/>
            <person name="Cook A.M."/>
            <person name="Kjelleberg S."/>
            <person name="Thomas T."/>
        </authorList>
    </citation>
    <scope>NUCLEOTIDE SEQUENCE [LARGE SCALE GENOMIC DNA]</scope>
    <source>
        <strain>DS-1 / DSM 13023 / NCIMB 13966</strain>
    </source>
</reference>
<comment type="similarity">
    <text evidence="1">Belongs to the bacterial ribosomal protein bL34 family.</text>
</comment>
<protein>
    <recommendedName>
        <fullName evidence="1">Large ribosomal subunit protein bL34</fullName>
    </recommendedName>
    <alternativeName>
        <fullName evidence="3">50S ribosomal protein L34</fullName>
    </alternativeName>
</protein>
<sequence length="44" mass="5151">MKRTYQPSKLVRKRRHGFRARTQTVGGRKVLAARRSKGRKRLSA</sequence>
<proteinExistence type="inferred from homology"/>
<keyword id="KW-1185">Reference proteome</keyword>
<keyword id="KW-0687">Ribonucleoprotein</keyword>
<keyword id="KW-0689">Ribosomal protein</keyword>
<accession>A7HPU1</accession>
<feature type="chain" id="PRO_1000072219" description="Large ribosomal subunit protein bL34">
    <location>
        <begin position="1"/>
        <end position="44"/>
    </location>
</feature>
<feature type="region of interest" description="Disordered" evidence="2">
    <location>
        <begin position="1"/>
        <end position="44"/>
    </location>
</feature>
<feature type="compositionally biased region" description="Basic residues" evidence="2">
    <location>
        <begin position="10"/>
        <end position="19"/>
    </location>
</feature>
<feature type="compositionally biased region" description="Basic residues" evidence="2">
    <location>
        <begin position="31"/>
        <end position="44"/>
    </location>
</feature>
<name>RL34_PARL1</name>
<evidence type="ECO:0000255" key="1">
    <source>
        <dbReference type="HAMAP-Rule" id="MF_00391"/>
    </source>
</evidence>
<evidence type="ECO:0000256" key="2">
    <source>
        <dbReference type="SAM" id="MobiDB-lite"/>
    </source>
</evidence>
<evidence type="ECO:0000305" key="3"/>